<dbReference type="EC" id="2.5.1.61" evidence="1"/>
<dbReference type="EMBL" id="AM263198">
    <property type="protein sequence ID" value="CAK20987.1"/>
    <property type="molecule type" value="Genomic_DNA"/>
</dbReference>
<dbReference type="RefSeq" id="WP_011702355.1">
    <property type="nucleotide sequence ID" value="NC_008555.1"/>
</dbReference>
<dbReference type="SMR" id="A0AJ05"/>
<dbReference type="STRING" id="386043.lwe1569"/>
<dbReference type="GeneID" id="61189446"/>
<dbReference type="KEGG" id="lwe:lwe1569"/>
<dbReference type="eggNOG" id="COG0181">
    <property type="taxonomic scope" value="Bacteria"/>
</dbReference>
<dbReference type="HOGENOM" id="CLU_019704_0_2_9"/>
<dbReference type="OrthoDB" id="9810298at2"/>
<dbReference type="UniPathway" id="UPA00251">
    <property type="reaction ID" value="UER00319"/>
</dbReference>
<dbReference type="Proteomes" id="UP000000779">
    <property type="component" value="Chromosome"/>
</dbReference>
<dbReference type="GO" id="GO:0005737">
    <property type="term" value="C:cytoplasm"/>
    <property type="evidence" value="ECO:0007669"/>
    <property type="project" value="TreeGrafter"/>
</dbReference>
<dbReference type="GO" id="GO:0004418">
    <property type="term" value="F:hydroxymethylbilane synthase activity"/>
    <property type="evidence" value="ECO:0007669"/>
    <property type="project" value="UniProtKB-UniRule"/>
</dbReference>
<dbReference type="GO" id="GO:0006782">
    <property type="term" value="P:protoporphyrinogen IX biosynthetic process"/>
    <property type="evidence" value="ECO:0007669"/>
    <property type="project" value="UniProtKB-UniRule"/>
</dbReference>
<dbReference type="CDD" id="cd13646">
    <property type="entry name" value="PBP2_EcHMBS_like"/>
    <property type="match status" value="1"/>
</dbReference>
<dbReference type="FunFam" id="3.30.160.40:FF:000001">
    <property type="entry name" value="Porphobilinogen deaminase"/>
    <property type="match status" value="1"/>
</dbReference>
<dbReference type="FunFam" id="3.40.190.10:FF:000004">
    <property type="entry name" value="Porphobilinogen deaminase"/>
    <property type="match status" value="1"/>
</dbReference>
<dbReference type="FunFam" id="3.40.190.10:FF:000005">
    <property type="entry name" value="Porphobilinogen deaminase"/>
    <property type="match status" value="1"/>
</dbReference>
<dbReference type="Gene3D" id="3.40.190.10">
    <property type="entry name" value="Periplasmic binding protein-like II"/>
    <property type="match status" value="2"/>
</dbReference>
<dbReference type="Gene3D" id="3.30.160.40">
    <property type="entry name" value="Porphobilinogen deaminase, C-terminal domain"/>
    <property type="match status" value="1"/>
</dbReference>
<dbReference type="HAMAP" id="MF_00260">
    <property type="entry name" value="Porphobil_deam"/>
    <property type="match status" value="1"/>
</dbReference>
<dbReference type="InterPro" id="IPR000860">
    <property type="entry name" value="HemC"/>
</dbReference>
<dbReference type="InterPro" id="IPR022419">
    <property type="entry name" value="Porphobilin_deaminase_cofac_BS"/>
</dbReference>
<dbReference type="InterPro" id="IPR022417">
    <property type="entry name" value="Porphobilin_deaminase_N"/>
</dbReference>
<dbReference type="InterPro" id="IPR022418">
    <property type="entry name" value="Porphobilinogen_deaminase_C"/>
</dbReference>
<dbReference type="InterPro" id="IPR036803">
    <property type="entry name" value="Porphobilinogen_deaminase_C_sf"/>
</dbReference>
<dbReference type="NCBIfam" id="TIGR00212">
    <property type="entry name" value="hemC"/>
    <property type="match status" value="1"/>
</dbReference>
<dbReference type="PANTHER" id="PTHR11557">
    <property type="entry name" value="PORPHOBILINOGEN DEAMINASE"/>
    <property type="match status" value="1"/>
</dbReference>
<dbReference type="PANTHER" id="PTHR11557:SF0">
    <property type="entry name" value="PORPHOBILINOGEN DEAMINASE"/>
    <property type="match status" value="1"/>
</dbReference>
<dbReference type="Pfam" id="PF01379">
    <property type="entry name" value="Porphobil_deam"/>
    <property type="match status" value="1"/>
</dbReference>
<dbReference type="Pfam" id="PF03900">
    <property type="entry name" value="Porphobil_deamC"/>
    <property type="match status" value="1"/>
</dbReference>
<dbReference type="PIRSF" id="PIRSF001438">
    <property type="entry name" value="4pyrrol_synth_OHMeBilane_synth"/>
    <property type="match status" value="1"/>
</dbReference>
<dbReference type="PRINTS" id="PR00151">
    <property type="entry name" value="PORPHBDMNASE"/>
</dbReference>
<dbReference type="SUPFAM" id="SSF53850">
    <property type="entry name" value="Periplasmic binding protein-like II"/>
    <property type="match status" value="1"/>
</dbReference>
<dbReference type="SUPFAM" id="SSF54782">
    <property type="entry name" value="Porphobilinogen deaminase (hydroxymethylbilane synthase), C-terminal domain"/>
    <property type="match status" value="1"/>
</dbReference>
<dbReference type="PROSITE" id="PS00533">
    <property type="entry name" value="PORPHOBILINOGEN_DEAM"/>
    <property type="match status" value="1"/>
</dbReference>
<gene>
    <name evidence="1" type="primary">hemC</name>
    <name type="ordered locus">lwe1569</name>
</gene>
<reference key="1">
    <citation type="journal article" date="2006" name="J. Bacteriol.">
        <title>Whole-genome sequence of Listeria welshimeri reveals common steps in genome reduction with Listeria innocua as compared to Listeria monocytogenes.</title>
        <authorList>
            <person name="Hain T."/>
            <person name="Steinweg C."/>
            <person name="Kuenne C.T."/>
            <person name="Billion A."/>
            <person name="Ghai R."/>
            <person name="Chatterjee S.S."/>
            <person name="Domann E."/>
            <person name="Kaerst U."/>
            <person name="Goesmann A."/>
            <person name="Bekel T."/>
            <person name="Bartels D."/>
            <person name="Kaiser O."/>
            <person name="Meyer F."/>
            <person name="Puehler A."/>
            <person name="Weisshaar B."/>
            <person name="Wehland J."/>
            <person name="Liang C."/>
            <person name="Dandekar T."/>
            <person name="Lampidis R."/>
            <person name="Kreft J."/>
            <person name="Goebel W."/>
            <person name="Chakraborty T."/>
        </authorList>
    </citation>
    <scope>NUCLEOTIDE SEQUENCE [LARGE SCALE GENOMIC DNA]</scope>
    <source>
        <strain>ATCC 35897 / DSM 20650 / CCUG 15529 / CIP 8149 / NCTC 11857 / SLCC 5334 / V8</strain>
    </source>
</reference>
<comment type="function">
    <text evidence="1">Tetrapolymerization of the monopyrrole PBG into the hydroxymethylbilane pre-uroporphyrinogen in several discrete steps.</text>
</comment>
<comment type="catalytic activity">
    <reaction evidence="1">
        <text>4 porphobilinogen + H2O = hydroxymethylbilane + 4 NH4(+)</text>
        <dbReference type="Rhea" id="RHEA:13185"/>
        <dbReference type="ChEBI" id="CHEBI:15377"/>
        <dbReference type="ChEBI" id="CHEBI:28938"/>
        <dbReference type="ChEBI" id="CHEBI:57845"/>
        <dbReference type="ChEBI" id="CHEBI:58126"/>
        <dbReference type="EC" id="2.5.1.61"/>
    </reaction>
</comment>
<comment type="cofactor">
    <cofactor evidence="1">
        <name>dipyrromethane</name>
        <dbReference type="ChEBI" id="CHEBI:60342"/>
    </cofactor>
    <text evidence="1">Binds 1 dipyrromethane group covalently.</text>
</comment>
<comment type="pathway">
    <text evidence="1">Porphyrin-containing compound metabolism; protoporphyrin-IX biosynthesis; coproporphyrinogen-III from 5-aminolevulinate: step 2/4.</text>
</comment>
<comment type="subunit">
    <text evidence="1">Monomer.</text>
</comment>
<comment type="miscellaneous">
    <text evidence="1">The porphobilinogen subunits are added to the dipyrromethane group.</text>
</comment>
<comment type="similarity">
    <text evidence="1">Belongs to the HMBS family.</text>
</comment>
<name>HEM3_LISW6</name>
<keyword id="KW-0627">Porphyrin biosynthesis</keyword>
<keyword id="KW-0808">Transferase</keyword>
<sequence>MKRKIIVGSRRSKLALTQSNWVINKLKEQYPEFDFEIKEIVTKGDRILDVTLSKVGGKGLFVSEVEQALSNSTIDFAVHSMKDVPSSLEEGLVIGAIPKRESPLDCFVFNQVSSLDDLPKGAIVGTSSLRRAAQLLKHRPDFNIRPIRGNIDTRLQKLHVENFDAIILAKAGLARMGWLENTTLKLEDIAPEVCLPAVGQGALAIECRESDQLIRDMLATIHHEETGICVEAERVFLKKLNGGCEIPIAGFATKIGEQIHFKGLVGNADGSKILESKEIGENPGQIGNKVAEVLLSEGAETIIEELRNK</sequence>
<feature type="chain" id="PRO_0000304248" description="Porphobilinogen deaminase">
    <location>
        <begin position="1"/>
        <end position="309"/>
    </location>
</feature>
<feature type="modified residue" description="S-(dipyrrolylmethanemethyl)cysteine" evidence="1">
    <location>
        <position position="244"/>
    </location>
</feature>
<proteinExistence type="inferred from homology"/>
<organism>
    <name type="scientific">Listeria welshimeri serovar 6b (strain ATCC 35897 / DSM 20650 / CCUG 15529 / CIP 8149 / NCTC 11857 / SLCC 5334 / V8)</name>
    <dbReference type="NCBI Taxonomy" id="386043"/>
    <lineage>
        <taxon>Bacteria</taxon>
        <taxon>Bacillati</taxon>
        <taxon>Bacillota</taxon>
        <taxon>Bacilli</taxon>
        <taxon>Bacillales</taxon>
        <taxon>Listeriaceae</taxon>
        <taxon>Listeria</taxon>
    </lineage>
</organism>
<evidence type="ECO:0000255" key="1">
    <source>
        <dbReference type="HAMAP-Rule" id="MF_00260"/>
    </source>
</evidence>
<protein>
    <recommendedName>
        <fullName evidence="1">Porphobilinogen deaminase</fullName>
        <shortName evidence="1">PBG</shortName>
        <ecNumber evidence="1">2.5.1.61</ecNumber>
    </recommendedName>
    <alternativeName>
        <fullName evidence="1">Hydroxymethylbilane synthase</fullName>
        <shortName evidence="1">HMBS</shortName>
    </alternativeName>
    <alternativeName>
        <fullName evidence="1">Pre-uroporphyrinogen synthase</fullName>
    </alternativeName>
</protein>
<accession>A0AJ05</accession>